<sequence>MPAGMTKHGSRSTSSLPPEPMEIVRSKACSRRVRLNVGGLAHEVLWRTLDRLPRTRLGKLRDCNTHDSLLEVCDDYSLDDNEYFFDRHPGAFTSILNFYRTGRLHMMEEMCALSFSQELDYWGIDEIYLESCCQARYHQKKEQMNEELKREAETLREREGEEFDNTCCAEKRKKLWDLLEKPNSSVAAKILAIISIMFIVLSTIALSLNTLPELQSLDEFGQSTDNPQLAHVEAVCIAWFTMEYLLRFLSSPKKWKFFKGPLNAIDLLAILPYYVTIFLTESNKSVLQFQNVRRVVQIFRIMRILRILKLARHSTGLQSLGFTLRRSYNELGLLILFLAMGIMIFSSLVFFAEKDEDDTKFKSIPASFWWATITMTTVGYGDIYPKTLLGKIVGGLCCIAGVLVIALPIPIIVNNFSEFYKEQKRQEKAIKRREALERAKRNGSIVSMNMKDAFARSIEMMDIVVEKNGENMGKKDKVQDNHLSPNKWKWTKRTLSETSSSKSFETKEQGSPEKARSSSSPQHLNVQQLEDMYNKMAKTQSQPILNTKESAAQSKPKEELEMESIPSPVAPLPTRTEGVIDMRSMSSIDSFISCATDFPEATRFSHSPLTSLPSKTGGSTAPEVGWRGALGASGGRFVEANPSPDASQHSSFFIESPKSSMKTNNPLKLRALKVNFMEGDPSPLLPVLGMYHDPLRNRGSAAAAVAGLECATLLDKAVLSPESSIYTTASAKTPPRSPEKHTAIAFNFEAGVHQYIDADTDDEGQLLYSVDSSPPKSLPGSTSPKFSTGTRSEKNHFESSPLPTSPKFLRQNCIYSTEALTGKGPSGQEKCKLENHISPDVRVLPGGGAHGSTRDQSI</sequence>
<keyword id="KW-0002">3D-structure</keyword>
<keyword id="KW-1003">Cell membrane</keyword>
<keyword id="KW-0966">Cell projection</keyword>
<keyword id="KW-0225">Disease variant</keyword>
<keyword id="KW-0887">Epilepsy</keyword>
<keyword id="KW-0268">Exocytosis</keyword>
<keyword id="KW-0407">Ion channel</keyword>
<keyword id="KW-0406">Ion transport</keyword>
<keyword id="KW-1017">Isopeptide bond</keyword>
<keyword id="KW-0472">Membrane</keyword>
<keyword id="KW-0597">Phosphoprotein</keyword>
<keyword id="KW-0628">Postsynaptic cell membrane</keyword>
<keyword id="KW-0630">Potassium</keyword>
<keyword id="KW-0631">Potassium channel</keyword>
<keyword id="KW-0633">Potassium transport</keyword>
<keyword id="KW-1267">Proteomics identification</keyword>
<keyword id="KW-1185">Reference proteome</keyword>
<keyword id="KW-0770">Synapse</keyword>
<keyword id="KW-0771">Synaptosome</keyword>
<keyword id="KW-0812">Transmembrane</keyword>
<keyword id="KW-1133">Transmembrane helix</keyword>
<keyword id="KW-0813">Transport</keyword>
<keyword id="KW-0832">Ubl conjugation</keyword>
<keyword id="KW-0851">Voltage-gated channel</keyword>
<feature type="chain" id="PRO_0000054042" description="Potassium voltage-gated channel subfamily B member 1">
    <location>
        <begin position="1"/>
        <end position="858"/>
    </location>
</feature>
<feature type="topological domain" description="Cytoplasmic" evidence="2">
    <location>
        <begin position="1"/>
        <end position="186"/>
    </location>
</feature>
<feature type="transmembrane region" description="Helical; Name=Segment S1" evidence="2">
    <location>
        <begin position="187"/>
        <end position="208"/>
    </location>
</feature>
<feature type="topological domain" description="Extracellular" evidence="2">
    <location>
        <begin position="209"/>
        <end position="228"/>
    </location>
</feature>
<feature type="transmembrane region" description="Helical; Name=Segment S2" evidence="2">
    <location>
        <begin position="229"/>
        <end position="250"/>
    </location>
</feature>
<feature type="topological domain" description="Cytoplasmic" evidence="2">
    <location>
        <begin position="251"/>
        <end position="259"/>
    </location>
</feature>
<feature type="transmembrane region" description="Helical; Name=Segment S3" evidence="2">
    <location>
        <begin position="260"/>
        <end position="280"/>
    </location>
</feature>
<feature type="topological domain" description="Extracellular" evidence="2">
    <location>
        <begin position="281"/>
        <end position="294"/>
    </location>
</feature>
<feature type="transmembrane region" description="Helical; Voltage-sensor; Name=Segment S4" evidence="2">
    <location>
        <begin position="295"/>
        <end position="316"/>
    </location>
</feature>
<feature type="topological domain" description="Cytoplasmic" evidence="2">
    <location>
        <begin position="317"/>
        <end position="330"/>
    </location>
</feature>
<feature type="transmembrane region" description="Helical; Name=Segment S5" evidence="2">
    <location>
        <begin position="331"/>
        <end position="351"/>
    </location>
</feature>
<feature type="topological domain" description="Extracellular" evidence="2">
    <location>
        <begin position="352"/>
        <end position="364"/>
    </location>
</feature>
<feature type="intramembrane region" description="Helical; Name=Pore helix" evidence="2">
    <location>
        <begin position="365"/>
        <end position="376"/>
    </location>
</feature>
<feature type="intramembrane region" evidence="2">
    <location>
        <begin position="377"/>
        <end position="384"/>
    </location>
</feature>
<feature type="topological domain" description="Extracellular" evidence="2">
    <location>
        <begin position="385"/>
        <end position="391"/>
    </location>
</feature>
<feature type="transmembrane region" description="Helical; Name=Segment S6" evidence="2">
    <location>
        <begin position="392"/>
        <end position="420"/>
    </location>
</feature>
<feature type="topological domain" description="Cytoplasmic" evidence="2">
    <location>
        <begin position="421"/>
        <end position="858"/>
    </location>
</feature>
<feature type="region of interest" description="Disordered" evidence="4">
    <location>
        <begin position="1"/>
        <end position="21"/>
    </location>
</feature>
<feature type="region of interest" description="Self-association" evidence="1">
    <location>
        <begin position="59"/>
        <end position="75"/>
    </location>
</feature>
<feature type="region of interest" description="Self-association" evidence="1">
    <location>
        <begin position="448"/>
        <end position="481"/>
    </location>
</feature>
<feature type="region of interest" description="Disordered" evidence="4">
    <location>
        <begin position="471"/>
        <end position="524"/>
    </location>
</feature>
<feature type="region of interest" description="Disordered" evidence="4">
    <location>
        <begin position="538"/>
        <end position="574"/>
    </location>
</feature>
<feature type="region of interest" description="Disordered" evidence="4">
    <location>
        <begin position="770"/>
        <end position="807"/>
    </location>
</feature>
<feature type="region of interest" description="Disordered" evidence="4">
    <location>
        <begin position="836"/>
        <end position="858"/>
    </location>
</feature>
<feature type="short sequence motif" description="Selectivity filter" evidence="2">
    <location>
        <begin position="377"/>
        <end position="382"/>
    </location>
</feature>
<feature type="short sequence motif" description="FFAT" evidence="23">
    <location>
        <begin position="590"/>
        <end position="596"/>
    </location>
</feature>
<feature type="compositionally biased region" description="Basic and acidic residues" evidence="4">
    <location>
        <begin position="471"/>
        <end position="480"/>
    </location>
</feature>
<feature type="compositionally biased region" description="Basic and acidic residues" evidence="4">
    <location>
        <begin position="504"/>
        <end position="516"/>
    </location>
</feature>
<feature type="compositionally biased region" description="Polar residues" evidence="4">
    <location>
        <begin position="538"/>
        <end position="553"/>
    </location>
</feature>
<feature type="compositionally biased region" description="Polar residues" evidence="4">
    <location>
        <begin position="770"/>
        <end position="790"/>
    </location>
</feature>
<feature type="modified residue" description="Phosphoserine" evidence="1">
    <location>
        <position position="15"/>
    </location>
</feature>
<feature type="modified residue" description="Phosphotyrosine; by Src" evidence="1">
    <location>
        <position position="128"/>
    </location>
</feature>
<feature type="modified residue" description="Phosphoserine" evidence="3">
    <location>
        <position position="444"/>
    </location>
</feature>
<feature type="modified residue" description="Phosphoserine" evidence="3">
    <location>
        <position position="457"/>
    </location>
</feature>
<feature type="modified residue" description="Phosphoserine" evidence="1">
    <location>
        <position position="484"/>
    </location>
</feature>
<feature type="modified residue" description="Phosphoserine" evidence="1">
    <location>
        <position position="496"/>
    </location>
</feature>
<feature type="modified residue" description="Phosphoserine" evidence="1">
    <location>
        <position position="503"/>
    </location>
</feature>
<feature type="modified residue" description="Phosphoserine" evidence="1">
    <location>
        <position position="519"/>
    </location>
</feature>
<feature type="modified residue" description="Phosphoserine; by CDK5; in vitro" evidence="1">
    <location>
        <position position="520"/>
    </location>
</feature>
<feature type="modified residue" description="Phosphoserine" evidence="1">
    <location>
        <position position="541"/>
    </location>
</feature>
<feature type="modified residue" description="Phosphoserine" evidence="1">
    <location>
        <position position="567"/>
    </location>
</feature>
<feature type="modified residue" description="Phosphoserine" evidence="1">
    <location>
        <position position="590"/>
    </location>
</feature>
<feature type="modified residue" description="Phosphoserine" evidence="30">
    <location>
        <position position="593"/>
    </location>
</feature>
<feature type="modified residue" description="Phosphoserine; by CDK5" evidence="1">
    <location>
        <position position="607"/>
    </location>
</feature>
<feature type="modified residue" description="Phosphoserine; by CDK5; in vitro" evidence="1">
    <location>
        <position position="656"/>
    </location>
</feature>
<feature type="modified residue" description="Phosphoserine" evidence="1">
    <location>
        <position position="720"/>
    </location>
</feature>
<feature type="modified residue" description="Phosphoserine" evidence="1">
    <location>
        <position position="772"/>
    </location>
</feature>
<feature type="modified residue" description="Phosphoserine" evidence="1">
    <location>
        <position position="800"/>
    </location>
</feature>
<feature type="modified residue" description="Phosphoserine; by CDK5, MAPK14; in vitro" evidence="1">
    <location>
        <position position="805"/>
    </location>
</feature>
<feature type="cross-link" description="Glycyl lysine isopeptide (Lys-Gly) (interchain with G-Cter in SUMO)" evidence="1">
    <location>
        <position position="474"/>
    </location>
</feature>
<feature type="sequence variant" id="VAR_075573" description="In DEE26; reduces sensitivity and cooperativity of the voltage sensor for channel opening and greatly suppresses repetitive firing in cultured cortical neurons; dbSNP:rs1555889130." evidence="21">
    <original>R</original>
    <variation>C</variation>
    <location>
        <position position="306"/>
    </location>
</feature>
<feature type="sequence variant" id="VAR_071991" description="In DEE26; inhibits ion selectivity and gain of a depolarizing inward cation conductance; trafficks normally to the cell surface; dbSNP:rs587777848." evidence="20">
    <original>S</original>
    <variation>R</variation>
    <location>
        <position position="347"/>
    </location>
</feature>
<feature type="sequence variant" id="VAR_071992" description="In DEE26; inhibits ion selectivity and gain of a depolarizing inward cation conductance; trafficks normally to the cell surface; dbSNP:rs587777849." evidence="20">
    <original>T</original>
    <variation>I</variation>
    <location>
        <position position="374"/>
    </location>
</feature>
<feature type="sequence variant" id="VAR_075574" description="In DEE26; change in the ion selectivity from potassium-selective to nonselective cation channels and significant decrease in cell membrane localization." evidence="22">
    <original>V</original>
    <variation>A</variation>
    <location>
        <position position="378"/>
    </location>
</feature>
<feature type="sequence variant" id="VAR_071993" description="In DEE26; inhibits ion selectivity and gain of a depolarizing inward cation conductance; trafficks normally to the cell surface; dbSNP:rs587777850." evidence="20">
    <original>G</original>
    <variation>R</variation>
    <location>
        <position position="379"/>
    </location>
</feature>
<feature type="sequence variant" id="VAR_075575" description="In DEE26; dominant-negative mutation resulting in loss of endogenous channel currents and greatly suppresses repetitive firing in cultured cortical neurons." evidence="21">
    <original>G</original>
    <variation>R</variation>
    <location>
        <position position="401"/>
    </location>
</feature>
<feature type="sequence variant" id="VAR_062182" description="In dbSNP:rs2229006.">
    <original>T</original>
    <variation>N</variation>
    <location>
        <position position="616"/>
    </location>
</feature>
<feature type="sequence variant" id="VAR_062183" description="In dbSNP:rs2229006.">
    <original>T</original>
    <variation>S</variation>
    <location>
        <position position="616"/>
    </location>
</feature>
<feature type="sequence variant" id="VAR_034049" description="In dbSNP:rs34467662.">
    <original>P</original>
    <variation>S</variation>
    <location>
        <position position="825"/>
    </location>
</feature>
<feature type="sequence variant" id="VAR_062184" description="In dbSNP:rs34280195.">
    <original>S</original>
    <variation>N</variation>
    <location>
        <position position="857"/>
    </location>
</feature>
<feature type="mutagenesis site" description="No effect on channel activity." evidence="9">
    <original>E</original>
    <variation>Q</variation>
    <location>
        <position position="71"/>
    </location>
</feature>
<feature type="mutagenesis site" description="Reduces interaction with KCNG1 and self-interaction and impairs plasma membrane subcellular localization, homotetramerization and hetetrotetramerization with KCNG4; when associated with R-75." evidence="16 19">
    <original>D</original>
    <variation>R</variation>
    <location>
        <position position="74"/>
    </location>
</feature>
<feature type="mutagenesis site" description="Reduces interaction with KCNG1 and self-interaction and impairs plasma membrane subcellular localization, homotetramerization and hetetrotetramerization with KCNG4; when associated with R-74." evidence="16 19">
    <original>D</original>
    <variation>R</variation>
    <location>
        <position position="75"/>
    </location>
</feature>
<feature type="mutagenesis site" description="Increases channel activity." evidence="9">
    <original>D</original>
    <variation>E</variation>
    <location>
        <position position="79"/>
    </location>
</feature>
<feature type="mutagenesis site" description="Reduces channel activity. Inhibits interaction with KCNG4. Impairs hetetrotetramerization with KCNG1, KCNG3 or KCNG4. Does not impair homotetramerization." evidence="13">
    <original>H</original>
    <variation>V</variation>
    <variation>R</variation>
    <location>
        <position position="105"/>
    </location>
</feature>
<feature type="strand" evidence="32">
    <location>
        <begin position="31"/>
        <end position="37"/>
    </location>
</feature>
<feature type="strand" evidence="32">
    <location>
        <begin position="40"/>
        <end position="45"/>
    </location>
</feature>
<feature type="helix" evidence="32">
    <location>
        <begin position="46"/>
        <end position="50"/>
    </location>
</feature>
<feature type="helix" evidence="32">
    <location>
        <begin position="56"/>
        <end position="60"/>
    </location>
</feature>
<feature type="helix" evidence="32">
    <location>
        <begin position="66"/>
        <end position="72"/>
    </location>
</feature>
<feature type="strand" evidence="32">
    <location>
        <begin position="73"/>
        <end position="77"/>
    </location>
</feature>
<feature type="turn" evidence="32">
    <location>
        <begin position="78"/>
        <end position="81"/>
    </location>
</feature>
<feature type="strand" evidence="32">
    <location>
        <begin position="82"/>
        <end position="85"/>
    </location>
</feature>
<feature type="helix" evidence="33">
    <location>
        <begin position="89"/>
        <end position="91"/>
    </location>
</feature>
<feature type="helix" evidence="32">
    <location>
        <begin position="92"/>
        <end position="101"/>
    </location>
</feature>
<feature type="helix" evidence="32">
    <location>
        <begin position="112"/>
        <end position="122"/>
    </location>
</feature>
<feature type="helix" evidence="32">
    <location>
        <begin position="126"/>
        <end position="128"/>
    </location>
</feature>
<gene>
    <name evidence="31" type="primary">KCNB1</name>
</gene>
<protein>
    <recommendedName>
        <fullName evidence="31">Potassium voltage-gated channel subfamily B member 1</fullName>
    </recommendedName>
    <alternativeName>
        <fullName evidence="26">Delayed rectifier potassium channel 1</fullName>
        <shortName evidence="26">DRK1</shortName>
        <shortName evidence="26">h-DRK1</shortName>
    </alternativeName>
    <alternativeName>
        <fullName evidence="26">Voltage-gated potassium channel subunit Kv2.1</fullName>
    </alternativeName>
</protein>
<dbReference type="EMBL" id="X68302">
    <property type="protein sequence ID" value="CAA48374.1"/>
    <property type="molecule type" value="Genomic_DNA"/>
</dbReference>
<dbReference type="EMBL" id="L02840">
    <property type="protein sequence ID" value="AAA36156.1"/>
    <property type="status" value="ALT_INIT"/>
    <property type="molecule type" value="mRNA"/>
</dbReference>
<dbReference type="EMBL" id="AF026005">
    <property type="protein sequence ID" value="AAB88808.1"/>
    <property type="molecule type" value="mRNA"/>
</dbReference>
<dbReference type="EMBL" id="AL035685">
    <property type="status" value="NOT_ANNOTATED_CDS"/>
    <property type="molecule type" value="Genomic_DNA"/>
</dbReference>
<dbReference type="CCDS" id="CCDS13418.1"/>
<dbReference type="PIR" id="S31761">
    <property type="entry name" value="S31761"/>
</dbReference>
<dbReference type="RefSeq" id="NP_004966.1">
    <property type="nucleotide sequence ID" value="NM_004975.4"/>
</dbReference>
<dbReference type="RefSeq" id="XP_006723847.1">
    <property type="nucleotide sequence ID" value="XM_006723784.3"/>
</dbReference>
<dbReference type="RefSeq" id="XP_011527101.1">
    <property type="nucleotide sequence ID" value="XM_011528799.3"/>
</dbReference>
<dbReference type="RefSeq" id="XP_054179388.1">
    <property type="nucleotide sequence ID" value="XM_054323413.1"/>
</dbReference>
<dbReference type="RefSeq" id="XP_054179389.1">
    <property type="nucleotide sequence ID" value="XM_054323414.1"/>
</dbReference>
<dbReference type="PDB" id="7RE5">
    <property type="method" value="X-ray"/>
    <property type="resolution" value="2.50 A"/>
    <property type="chains" value="A/B/C/D/E=29-147"/>
</dbReference>
<dbReference type="PDB" id="7SPD">
    <property type="method" value="X-ray"/>
    <property type="resolution" value="2.70 A"/>
    <property type="chains" value="A/B/C/D/E=29-147"/>
</dbReference>
<dbReference type="PDBsum" id="7RE5"/>
<dbReference type="PDBsum" id="7SPD"/>
<dbReference type="SASBDB" id="Q14721"/>
<dbReference type="SMR" id="Q14721"/>
<dbReference type="BioGRID" id="109947">
    <property type="interactions" value="29"/>
</dbReference>
<dbReference type="CORUM" id="Q14721"/>
<dbReference type="FunCoup" id="Q14721">
    <property type="interactions" value="69"/>
</dbReference>
<dbReference type="IntAct" id="Q14721">
    <property type="interactions" value="3"/>
</dbReference>
<dbReference type="STRING" id="9606.ENSP00000360806"/>
<dbReference type="BindingDB" id="Q14721"/>
<dbReference type="ChEMBL" id="CHEMBL2363000"/>
<dbReference type="DrugBank" id="DB06637">
    <property type="generic name" value="Dalfampridine"/>
</dbReference>
<dbReference type="DrugBank" id="DB00228">
    <property type="generic name" value="Enflurane"/>
</dbReference>
<dbReference type="DrugBank" id="DB01110">
    <property type="generic name" value="Miconazole"/>
</dbReference>
<dbReference type="DrugBank" id="DB01069">
    <property type="generic name" value="Promethazine"/>
</dbReference>
<dbReference type="DrugCentral" id="Q14721"/>
<dbReference type="GuidetoPHARMACOLOGY" id="546"/>
<dbReference type="TCDB" id="1.A.1.2.11">
    <property type="family name" value="the voltage-gated ion channel (vic) superfamily"/>
</dbReference>
<dbReference type="GlyGen" id="Q14721">
    <property type="glycosylation" value="1 site, 1 O-linked glycan (1 site)"/>
</dbReference>
<dbReference type="iPTMnet" id="Q14721"/>
<dbReference type="PhosphoSitePlus" id="Q14721"/>
<dbReference type="SwissPalm" id="Q14721"/>
<dbReference type="BioMuta" id="KCNB1"/>
<dbReference type="DMDM" id="24418854"/>
<dbReference type="OGP" id="Q14721"/>
<dbReference type="MassIVE" id="Q14721"/>
<dbReference type="PaxDb" id="9606-ENSP00000360806"/>
<dbReference type="PeptideAtlas" id="Q14721"/>
<dbReference type="ProteomicsDB" id="60144"/>
<dbReference type="ABCD" id="Q14721">
    <property type="antibodies" value="4 sequenced antibodies"/>
</dbReference>
<dbReference type="Antibodypedia" id="28477">
    <property type="antibodies" value="409 antibodies from 37 providers"/>
</dbReference>
<dbReference type="DNASU" id="3745"/>
<dbReference type="Ensembl" id="ENST00000371741.6">
    <property type="protein sequence ID" value="ENSP00000360806.3"/>
    <property type="gene ID" value="ENSG00000158445.10"/>
</dbReference>
<dbReference type="Ensembl" id="ENST00000635465.1">
    <property type="protein sequence ID" value="ENSP00000489193.1"/>
    <property type="gene ID" value="ENSG00000158445.10"/>
</dbReference>
<dbReference type="GeneID" id="3745"/>
<dbReference type="KEGG" id="hsa:3745"/>
<dbReference type="MANE-Select" id="ENST00000371741.6">
    <property type="protein sequence ID" value="ENSP00000360806.3"/>
    <property type="RefSeq nucleotide sequence ID" value="NM_004975.4"/>
    <property type="RefSeq protein sequence ID" value="NP_004966.1"/>
</dbReference>
<dbReference type="UCSC" id="uc002xur.2">
    <property type="organism name" value="human"/>
</dbReference>
<dbReference type="AGR" id="HGNC:6231"/>
<dbReference type="CTD" id="3745"/>
<dbReference type="DisGeNET" id="3745"/>
<dbReference type="GeneCards" id="KCNB1"/>
<dbReference type="HGNC" id="HGNC:6231">
    <property type="gene designation" value="KCNB1"/>
</dbReference>
<dbReference type="HPA" id="ENSG00000158445">
    <property type="expression patterns" value="Tissue enriched (retina)"/>
</dbReference>
<dbReference type="MalaCards" id="KCNB1"/>
<dbReference type="MIM" id="600397">
    <property type="type" value="gene"/>
</dbReference>
<dbReference type="MIM" id="616056">
    <property type="type" value="phenotype"/>
</dbReference>
<dbReference type="neXtProt" id="NX_Q14721"/>
<dbReference type="OpenTargets" id="ENSG00000158445"/>
<dbReference type="Orphanet" id="442835">
    <property type="disease" value="Non-specific early-onset epileptic encephalopathy"/>
</dbReference>
<dbReference type="PharmGKB" id="PA209"/>
<dbReference type="VEuPathDB" id="HostDB:ENSG00000158445"/>
<dbReference type="eggNOG" id="KOG3713">
    <property type="taxonomic scope" value="Eukaryota"/>
</dbReference>
<dbReference type="GeneTree" id="ENSGT00940000154899"/>
<dbReference type="HOGENOM" id="CLU_011722_2_1_1"/>
<dbReference type="InParanoid" id="Q14721"/>
<dbReference type="OMA" id="ASIHQYI"/>
<dbReference type="OrthoDB" id="296522at2759"/>
<dbReference type="PAN-GO" id="Q14721">
    <property type="GO annotations" value="9 GO annotations based on evolutionary models"/>
</dbReference>
<dbReference type="PhylomeDB" id="Q14721"/>
<dbReference type="TreeFam" id="TF313103"/>
<dbReference type="PathwayCommons" id="Q14721"/>
<dbReference type="Reactome" id="R-HSA-1296072">
    <property type="pathway name" value="Voltage gated Potassium channels"/>
</dbReference>
<dbReference type="Reactome" id="R-HSA-381676">
    <property type="pathway name" value="Glucagon-like Peptide-1 (GLP1) regulates insulin secretion"/>
</dbReference>
<dbReference type="SignaLink" id="Q14721"/>
<dbReference type="SIGNOR" id="Q14721"/>
<dbReference type="BioGRID-ORCS" id="3745">
    <property type="hits" value="14 hits in 1157 CRISPR screens"/>
</dbReference>
<dbReference type="ChiTaRS" id="KCNB1">
    <property type="organism name" value="human"/>
</dbReference>
<dbReference type="GeneWiki" id="KCNB1"/>
<dbReference type="GenomeRNAi" id="3745"/>
<dbReference type="Pharos" id="Q14721">
    <property type="development level" value="Tclin"/>
</dbReference>
<dbReference type="PRO" id="PR:Q14721"/>
<dbReference type="Proteomes" id="UP000005640">
    <property type="component" value="Chromosome 20"/>
</dbReference>
<dbReference type="RNAct" id="Q14721">
    <property type="molecule type" value="protein"/>
</dbReference>
<dbReference type="Bgee" id="ENSG00000158445">
    <property type="expression patterns" value="Expressed in Brodmann (1909) area 23 and 173 other cell types or tissues"/>
</dbReference>
<dbReference type="ExpressionAtlas" id="Q14721">
    <property type="expression patterns" value="baseline and differential"/>
</dbReference>
<dbReference type="GO" id="GO:0016324">
    <property type="term" value="C:apical plasma membrane"/>
    <property type="evidence" value="ECO:0007669"/>
    <property type="project" value="Ensembl"/>
</dbReference>
<dbReference type="GO" id="GO:0030424">
    <property type="term" value="C:axon"/>
    <property type="evidence" value="ECO:0000250"/>
    <property type="project" value="UniProtKB"/>
</dbReference>
<dbReference type="GO" id="GO:0009986">
    <property type="term" value="C:cell surface"/>
    <property type="evidence" value="ECO:0007669"/>
    <property type="project" value="Ensembl"/>
</dbReference>
<dbReference type="GO" id="GO:0098981">
    <property type="term" value="C:cholinergic synapse"/>
    <property type="evidence" value="ECO:0007669"/>
    <property type="project" value="Ensembl"/>
</dbReference>
<dbReference type="GO" id="GO:0030425">
    <property type="term" value="C:dendrite"/>
    <property type="evidence" value="ECO:0000250"/>
    <property type="project" value="UniProtKB"/>
</dbReference>
<dbReference type="GO" id="GO:0032590">
    <property type="term" value="C:dendrite membrane"/>
    <property type="evidence" value="ECO:0000318"/>
    <property type="project" value="GO_Central"/>
</dbReference>
<dbReference type="GO" id="GO:0016328">
    <property type="term" value="C:lateral plasma membrane"/>
    <property type="evidence" value="ECO:0007669"/>
    <property type="project" value="UniProtKB-SubCell"/>
</dbReference>
<dbReference type="GO" id="GO:0032809">
    <property type="term" value="C:neuronal cell body membrane"/>
    <property type="evidence" value="ECO:0000250"/>
    <property type="project" value="UniProtKB"/>
</dbReference>
<dbReference type="GO" id="GO:0043204">
    <property type="term" value="C:perikaryon"/>
    <property type="evidence" value="ECO:0000250"/>
    <property type="project" value="UniProtKB"/>
</dbReference>
<dbReference type="GO" id="GO:0048471">
    <property type="term" value="C:perinuclear region of cytoplasm"/>
    <property type="evidence" value="ECO:0007669"/>
    <property type="project" value="Ensembl"/>
</dbReference>
<dbReference type="GO" id="GO:0005886">
    <property type="term" value="C:plasma membrane"/>
    <property type="evidence" value="ECO:0000314"/>
    <property type="project" value="UniProtKB"/>
</dbReference>
<dbReference type="GO" id="GO:0045211">
    <property type="term" value="C:postsynaptic membrane"/>
    <property type="evidence" value="ECO:0000318"/>
    <property type="project" value="GO_Central"/>
</dbReference>
<dbReference type="GO" id="GO:0099634">
    <property type="term" value="C:postsynaptic specialization membrane"/>
    <property type="evidence" value="ECO:0007669"/>
    <property type="project" value="Ensembl"/>
</dbReference>
<dbReference type="GO" id="GO:1990635">
    <property type="term" value="C:proximal dendrite"/>
    <property type="evidence" value="ECO:0007669"/>
    <property type="project" value="Ensembl"/>
</dbReference>
<dbReference type="GO" id="GO:0042383">
    <property type="term" value="C:sarcolemma"/>
    <property type="evidence" value="ECO:0007669"/>
    <property type="project" value="UniProtKB-SubCell"/>
</dbReference>
<dbReference type="GO" id="GO:0008076">
    <property type="term" value="C:voltage-gated potassium channel complex"/>
    <property type="evidence" value="ECO:0000314"/>
    <property type="project" value="UniProtKB"/>
</dbReference>
<dbReference type="GO" id="GO:0005251">
    <property type="term" value="F:delayed rectifier potassium channel activity"/>
    <property type="evidence" value="ECO:0000314"/>
    <property type="project" value="UniProtKB"/>
</dbReference>
<dbReference type="GO" id="GO:0015271">
    <property type="term" value="F:outward rectifier potassium channel activity"/>
    <property type="evidence" value="ECO:0007669"/>
    <property type="project" value="Ensembl"/>
</dbReference>
<dbReference type="GO" id="GO:0015459">
    <property type="term" value="F:potassium channel regulator activity"/>
    <property type="evidence" value="ECO:0000318"/>
    <property type="project" value="GO_Central"/>
</dbReference>
<dbReference type="GO" id="GO:0046982">
    <property type="term" value="F:protein heterodimerization activity"/>
    <property type="evidence" value="ECO:0000250"/>
    <property type="project" value="UniProtKB"/>
</dbReference>
<dbReference type="GO" id="GO:0000149">
    <property type="term" value="F:SNARE binding"/>
    <property type="evidence" value="ECO:0007669"/>
    <property type="project" value="Ensembl"/>
</dbReference>
<dbReference type="GO" id="GO:0044325">
    <property type="term" value="F:transmembrane transporter binding"/>
    <property type="evidence" value="ECO:0000353"/>
    <property type="project" value="UniProtKB"/>
</dbReference>
<dbReference type="GO" id="GO:0001508">
    <property type="term" value="P:action potential"/>
    <property type="evidence" value="ECO:0000314"/>
    <property type="project" value="UniProtKB"/>
</dbReference>
<dbReference type="GO" id="GO:0071277">
    <property type="term" value="P:cellular response to calcium ion"/>
    <property type="evidence" value="ECO:0007669"/>
    <property type="project" value="Ensembl"/>
</dbReference>
<dbReference type="GO" id="GO:0071333">
    <property type="term" value="P:cellular response to glucose stimulus"/>
    <property type="evidence" value="ECO:0000250"/>
    <property type="project" value="UniProtKB"/>
</dbReference>
<dbReference type="GO" id="GO:0031669">
    <property type="term" value="P:cellular response to nutrient levels"/>
    <property type="evidence" value="ECO:0000250"/>
    <property type="project" value="UniProtKB"/>
</dbReference>
<dbReference type="GO" id="GO:0045163">
    <property type="term" value="P:clustering of voltage-gated potassium channels"/>
    <property type="evidence" value="ECO:0007669"/>
    <property type="project" value="Ensembl"/>
</dbReference>
<dbReference type="GO" id="GO:0042593">
    <property type="term" value="P:glucose homeostasis"/>
    <property type="evidence" value="ECO:0000250"/>
    <property type="project" value="UniProtKB"/>
</dbReference>
<dbReference type="GO" id="GO:0007215">
    <property type="term" value="P:glutamate receptor signaling pathway"/>
    <property type="evidence" value="ECO:0000250"/>
    <property type="project" value="UniProtKB"/>
</dbReference>
<dbReference type="GO" id="GO:0046676">
    <property type="term" value="P:negative regulation of insulin secretion"/>
    <property type="evidence" value="ECO:0000250"/>
    <property type="project" value="UniProtKB"/>
</dbReference>
<dbReference type="GO" id="GO:0045956">
    <property type="term" value="P:positive regulation of calcium ion-dependent exocytosis"/>
    <property type="evidence" value="ECO:0000250"/>
    <property type="project" value="UniProtKB"/>
</dbReference>
<dbReference type="GO" id="GO:0033605">
    <property type="term" value="P:positive regulation of catecholamine secretion"/>
    <property type="evidence" value="ECO:0000250"/>
    <property type="project" value="UniProtKB"/>
</dbReference>
<dbReference type="GO" id="GO:1900454">
    <property type="term" value="P:positive regulation of long-term synaptic depression"/>
    <property type="evidence" value="ECO:0000250"/>
    <property type="project" value="UniProtKB"/>
</dbReference>
<dbReference type="GO" id="GO:0010701">
    <property type="term" value="P:positive regulation of norepinephrine secretion"/>
    <property type="evidence" value="ECO:0000250"/>
    <property type="project" value="UniProtKB"/>
</dbReference>
<dbReference type="GO" id="GO:0090314">
    <property type="term" value="P:positive regulation of protein targeting to membrane"/>
    <property type="evidence" value="ECO:0000314"/>
    <property type="project" value="UniProtKB"/>
</dbReference>
<dbReference type="GO" id="GO:0097623">
    <property type="term" value="P:potassium ion export across plasma membrane"/>
    <property type="evidence" value="ECO:0007669"/>
    <property type="project" value="Ensembl"/>
</dbReference>
<dbReference type="GO" id="GO:0071805">
    <property type="term" value="P:potassium ion transmembrane transport"/>
    <property type="evidence" value="ECO:0000314"/>
    <property type="project" value="UniProtKB"/>
</dbReference>
<dbReference type="GO" id="GO:0051260">
    <property type="term" value="P:protein homooligomerization"/>
    <property type="evidence" value="ECO:0007669"/>
    <property type="project" value="InterPro"/>
</dbReference>
<dbReference type="GO" id="GO:0072659">
    <property type="term" value="P:protein localization to plasma membrane"/>
    <property type="evidence" value="ECO:0000250"/>
    <property type="project" value="UniProtKB"/>
</dbReference>
<dbReference type="GO" id="GO:0098900">
    <property type="term" value="P:regulation of action potential"/>
    <property type="evidence" value="ECO:0000250"/>
    <property type="project" value="UniProtKB"/>
</dbReference>
<dbReference type="GO" id="GO:2000671">
    <property type="term" value="P:regulation of motor neuron apoptotic process"/>
    <property type="evidence" value="ECO:0000250"/>
    <property type="project" value="UniProtKB"/>
</dbReference>
<dbReference type="GO" id="GO:0048678">
    <property type="term" value="P:response to axon injury"/>
    <property type="evidence" value="ECO:0007669"/>
    <property type="project" value="Ensembl"/>
</dbReference>
<dbReference type="GO" id="GO:1902065">
    <property type="term" value="P:response to L-glutamate"/>
    <property type="evidence" value="ECO:0007669"/>
    <property type="project" value="Ensembl"/>
</dbReference>
<dbReference type="GO" id="GO:0006904">
    <property type="term" value="P:vesicle docking involved in exocytosis"/>
    <property type="evidence" value="ECO:0000250"/>
    <property type="project" value="UniProtKB"/>
</dbReference>
<dbReference type="CDD" id="cd18412">
    <property type="entry name" value="BTB_POZ_KCNB2"/>
    <property type="match status" value="1"/>
</dbReference>
<dbReference type="FunFam" id="1.10.287.70:FF:000034">
    <property type="entry name" value="Potassium voltage-gated channel subfamily B member"/>
    <property type="match status" value="1"/>
</dbReference>
<dbReference type="FunFam" id="1.20.120.350:FF:000018">
    <property type="entry name" value="Potassium voltage-gated channel subfamily B member"/>
    <property type="match status" value="1"/>
</dbReference>
<dbReference type="FunFam" id="3.30.710.10:FF:000010">
    <property type="entry name" value="Potassium voltage-gated channel subfamily B member"/>
    <property type="match status" value="1"/>
</dbReference>
<dbReference type="Gene3D" id="1.10.287.70">
    <property type="match status" value="1"/>
</dbReference>
<dbReference type="Gene3D" id="3.30.710.10">
    <property type="entry name" value="Potassium Channel Kv1.1, Chain A"/>
    <property type="match status" value="1"/>
</dbReference>
<dbReference type="Gene3D" id="1.20.120.350">
    <property type="entry name" value="Voltage-gated potassium channels. Chain C"/>
    <property type="match status" value="1"/>
</dbReference>
<dbReference type="InterPro" id="IPR000210">
    <property type="entry name" value="BTB/POZ_dom"/>
</dbReference>
<dbReference type="InterPro" id="IPR005821">
    <property type="entry name" value="Ion_trans_dom"/>
</dbReference>
<dbReference type="InterPro" id="IPR003968">
    <property type="entry name" value="K_chnl_volt-dep_Kv"/>
</dbReference>
<dbReference type="InterPro" id="IPR003973">
    <property type="entry name" value="K_chnl_volt-dep_Kv2"/>
</dbReference>
<dbReference type="InterPro" id="IPR004350">
    <property type="entry name" value="K_chnl_volt-dep_Kv2.1"/>
</dbReference>
<dbReference type="InterPro" id="IPR011333">
    <property type="entry name" value="SKP1/BTB/POZ_sf"/>
</dbReference>
<dbReference type="InterPro" id="IPR003131">
    <property type="entry name" value="T1-type_BTB"/>
</dbReference>
<dbReference type="InterPro" id="IPR028325">
    <property type="entry name" value="VG_K_chnl"/>
</dbReference>
<dbReference type="InterPro" id="IPR027359">
    <property type="entry name" value="Volt_channel_dom_sf"/>
</dbReference>
<dbReference type="PANTHER" id="PTHR11537:SF63">
    <property type="entry name" value="POTASSIUM VOLTAGE-GATED CHANNEL SUBFAMILY B MEMBER 1"/>
    <property type="match status" value="1"/>
</dbReference>
<dbReference type="PANTHER" id="PTHR11537">
    <property type="entry name" value="VOLTAGE-GATED POTASSIUM CHANNEL"/>
    <property type="match status" value="1"/>
</dbReference>
<dbReference type="Pfam" id="PF02214">
    <property type="entry name" value="BTB_2"/>
    <property type="match status" value="1"/>
</dbReference>
<dbReference type="Pfam" id="PF00520">
    <property type="entry name" value="Ion_trans"/>
    <property type="match status" value="1"/>
</dbReference>
<dbReference type="Pfam" id="PF03521">
    <property type="entry name" value="Kv2channel"/>
    <property type="match status" value="2"/>
</dbReference>
<dbReference type="PRINTS" id="PR00169">
    <property type="entry name" value="KCHANNEL"/>
</dbReference>
<dbReference type="PRINTS" id="PR01514">
    <property type="entry name" value="KV21CHANNEL"/>
</dbReference>
<dbReference type="PRINTS" id="PR01491">
    <property type="entry name" value="KVCHANNEL"/>
</dbReference>
<dbReference type="PRINTS" id="PR01495">
    <property type="entry name" value="SHABCHANNEL"/>
</dbReference>
<dbReference type="SMART" id="SM00225">
    <property type="entry name" value="BTB"/>
    <property type="match status" value="1"/>
</dbReference>
<dbReference type="SUPFAM" id="SSF54695">
    <property type="entry name" value="POZ domain"/>
    <property type="match status" value="1"/>
</dbReference>
<dbReference type="SUPFAM" id="SSF81324">
    <property type="entry name" value="Voltage-gated potassium channels"/>
    <property type="match status" value="1"/>
</dbReference>
<accession>Q14721</accession>
<accession>Q14193</accession>
<name>KCNB1_HUMAN</name>
<reference key="1">
    <citation type="journal article" date="1993" name="Recept. Channels">
        <title>Cloning and characterization of a human delayed rectifier potassium channel gene.</title>
        <authorList>
            <person name="Albrecht B."/>
            <person name="Lorra C."/>
            <person name="Stocker K."/>
            <person name="Pongs O."/>
        </authorList>
    </citation>
    <scope>NUCLEOTIDE SEQUENCE [GENOMIC DNA]</scope>
    <scope>FUNCTION</scope>
    <scope>TRANSPORTER ACTIVITY</scope>
    <scope>SUBUNIT</scope>
    <scope>BIOPHYSICOCHEMICAL PROPERTIES</scope>
    <scope>ACTIVITY REGULATION</scope>
    <scope>SUBCELLULAR LOCATION</scope>
</reference>
<reference key="2">
    <citation type="journal article" date="1992" name="Pflugers Arch.">
        <title>Heterologous expression of the human potassium channel Kv2.1 in clonal mammalian cells by direct cytoplasmic microinjection of cRNA.</title>
        <authorList>
            <person name="Ikeda S.R."/>
            <person name="Soler F."/>
            <person name="Zuhlke R.D."/>
            <person name="Joho R.H."/>
            <person name="Lewis D.L."/>
        </authorList>
    </citation>
    <scope>NUCLEOTIDE SEQUENCE [MRNA]</scope>
    <scope>FUNCTION</scope>
    <scope>TRANSPORTER ACTIVITY</scope>
    <scope>SUBUNIT</scope>
    <scope>BIOPHYSICOCHEMICAL PROPERTIES</scope>
    <scope>ACTIVITY REGULATION</scope>
    <scope>SUBCELLULAR LOCATION</scope>
    <source>
        <tissue>Brain cortex</tissue>
    </source>
</reference>
<reference key="3">
    <citation type="book" date="1998" name="The eye's aqueous humor-from secretion to glaucoma">
        <title>Identification of potassium channels in human lens epithelium.</title>
        <editorList>
            <person name="Civan M.M."/>
        </editorList>
        <authorList>
            <person name="Rae J.L."/>
            <person name="Shepard A.R."/>
        </authorList>
    </citation>
    <scope>NUCLEOTIDE SEQUENCE [MRNA]</scope>
    <source>
        <tissue>Lens epithelium</tissue>
    </source>
</reference>
<reference key="4">
    <citation type="journal article" date="2001" name="Nature">
        <title>The DNA sequence and comparative analysis of human chromosome 20.</title>
        <authorList>
            <person name="Deloukas P."/>
            <person name="Matthews L.H."/>
            <person name="Ashurst J.L."/>
            <person name="Burton J."/>
            <person name="Gilbert J.G.R."/>
            <person name="Jones M."/>
            <person name="Stavrides G."/>
            <person name="Almeida J.P."/>
            <person name="Babbage A.K."/>
            <person name="Bagguley C.L."/>
            <person name="Bailey J."/>
            <person name="Barlow K.F."/>
            <person name="Bates K.N."/>
            <person name="Beard L.M."/>
            <person name="Beare D.M."/>
            <person name="Beasley O.P."/>
            <person name="Bird C.P."/>
            <person name="Blakey S.E."/>
            <person name="Bridgeman A.M."/>
            <person name="Brown A.J."/>
            <person name="Buck D."/>
            <person name="Burrill W.D."/>
            <person name="Butler A.P."/>
            <person name="Carder C."/>
            <person name="Carter N.P."/>
            <person name="Chapman J.C."/>
            <person name="Clamp M."/>
            <person name="Clark G."/>
            <person name="Clark L.N."/>
            <person name="Clark S.Y."/>
            <person name="Clee C.M."/>
            <person name="Clegg S."/>
            <person name="Cobley V.E."/>
            <person name="Collier R.E."/>
            <person name="Connor R.E."/>
            <person name="Corby N.R."/>
            <person name="Coulson A."/>
            <person name="Coville G.J."/>
            <person name="Deadman R."/>
            <person name="Dhami P.D."/>
            <person name="Dunn M."/>
            <person name="Ellington A.G."/>
            <person name="Frankland J.A."/>
            <person name="Fraser A."/>
            <person name="French L."/>
            <person name="Garner P."/>
            <person name="Grafham D.V."/>
            <person name="Griffiths C."/>
            <person name="Griffiths M.N.D."/>
            <person name="Gwilliam R."/>
            <person name="Hall R.E."/>
            <person name="Hammond S."/>
            <person name="Harley J.L."/>
            <person name="Heath P.D."/>
            <person name="Ho S."/>
            <person name="Holden J.L."/>
            <person name="Howden P.J."/>
            <person name="Huckle E."/>
            <person name="Hunt A.R."/>
            <person name="Hunt S.E."/>
            <person name="Jekosch K."/>
            <person name="Johnson C.M."/>
            <person name="Johnson D."/>
            <person name="Kay M.P."/>
            <person name="Kimberley A.M."/>
            <person name="King A."/>
            <person name="Knights A."/>
            <person name="Laird G.K."/>
            <person name="Lawlor S."/>
            <person name="Lehvaeslaiho M.H."/>
            <person name="Leversha M.A."/>
            <person name="Lloyd C."/>
            <person name="Lloyd D.M."/>
            <person name="Lovell J.D."/>
            <person name="Marsh V.L."/>
            <person name="Martin S.L."/>
            <person name="McConnachie L.J."/>
            <person name="McLay K."/>
            <person name="McMurray A.A."/>
            <person name="Milne S.A."/>
            <person name="Mistry D."/>
            <person name="Moore M.J.F."/>
            <person name="Mullikin J.C."/>
            <person name="Nickerson T."/>
            <person name="Oliver K."/>
            <person name="Parker A."/>
            <person name="Patel R."/>
            <person name="Pearce T.A.V."/>
            <person name="Peck A.I."/>
            <person name="Phillimore B.J.C.T."/>
            <person name="Prathalingam S.R."/>
            <person name="Plumb R.W."/>
            <person name="Ramsay H."/>
            <person name="Rice C.M."/>
            <person name="Ross M.T."/>
            <person name="Scott C.E."/>
            <person name="Sehra H.K."/>
            <person name="Shownkeen R."/>
            <person name="Sims S."/>
            <person name="Skuce C.D."/>
            <person name="Smith M.L."/>
            <person name="Soderlund C."/>
            <person name="Steward C.A."/>
            <person name="Sulston J.E."/>
            <person name="Swann R.M."/>
            <person name="Sycamore N."/>
            <person name="Taylor R."/>
            <person name="Tee L."/>
            <person name="Thomas D.W."/>
            <person name="Thorpe A."/>
            <person name="Tracey A."/>
            <person name="Tromans A.C."/>
            <person name="Vaudin M."/>
            <person name="Wall M."/>
            <person name="Wallis J.M."/>
            <person name="Whitehead S.L."/>
            <person name="Whittaker P."/>
            <person name="Willey D.L."/>
            <person name="Williams L."/>
            <person name="Williams S.A."/>
            <person name="Wilming L."/>
            <person name="Wray P.W."/>
            <person name="Hubbard T."/>
            <person name="Durbin R.M."/>
            <person name="Bentley D.R."/>
            <person name="Beck S."/>
            <person name="Rogers J."/>
        </authorList>
    </citation>
    <scope>NUCLEOTIDE SEQUENCE [LARGE SCALE GENOMIC DNA]</scope>
</reference>
<reference key="5">
    <citation type="journal article" date="1999" name="Am. J. Physiol.">
        <title>Electrically silent potassium channel subunits from human lens epithelium.</title>
        <authorList>
            <person name="Shepard A.R."/>
            <person name="Rae J.L."/>
        </authorList>
    </citation>
    <scope>FUNCTION</scope>
    <scope>TRANSPORTER ACTIVITY</scope>
    <scope>SUBUNIT</scope>
    <scope>BIOPHYSICOCHEMICAL PROPERTIES</scope>
    <scope>SUBCELLULAR LOCATION</scope>
</reference>
<reference key="6">
    <citation type="journal article" date="1999" name="Ann. N. Y. Acad. Sci.">
        <title>Molecular diversity of K+ channels.</title>
        <authorList>
            <person name="Coetzee W.A."/>
            <person name="Amarillo Y."/>
            <person name="Chiu J."/>
            <person name="Chow A."/>
            <person name="Lau D."/>
            <person name="McCormack T."/>
            <person name="Moreno H."/>
            <person name="Nadal M.S."/>
            <person name="Ozaita A."/>
            <person name="Pountney D."/>
            <person name="Saganich M."/>
            <person name="Vega-Saenz de Miera E."/>
            <person name="Rudy B."/>
        </authorList>
    </citation>
    <scope>REVIEW</scope>
</reference>
<reference key="7">
    <citation type="journal article" date="2002" name="FEBS Lett.">
        <title>Molecular cloning and characterization of Kv6.3, a novel modulatory subunit for voltage-gated K(+) channel Kv2.1.</title>
        <authorList>
            <person name="Sano Y."/>
            <person name="Mochizuki S."/>
            <person name="Miyake A."/>
            <person name="Kitada C."/>
            <person name="Inamura K."/>
            <person name="Yokoi H."/>
            <person name="Nozawa K."/>
            <person name="Matsushime H."/>
            <person name="Furuichi K."/>
        </authorList>
    </citation>
    <scope>FUNCTION</scope>
    <scope>TRANSPORTER ACTIVITY</scope>
    <scope>SUBUNIT</scope>
    <scope>INTERACTION WITH KCNG3</scope>
    <scope>SELF-ASSOCIATION</scope>
    <scope>DOMAIN</scope>
    <scope>BIOPHYSICOCHEMICAL PROPERTIES</scope>
    <scope>SUBCELLULAR LOCATION</scope>
</reference>
<reference key="8">
    <citation type="journal article" date="2002" name="Mol. Endocrinol.">
        <title>Synaptosome-associated protein of 25 kilodaltons modulates Kv2.1 voltage-dependent K(+) channels in neuroendocrine islet beta-cells through an interaction with the channel N terminus.</title>
        <authorList>
            <person name="MacDonald P.E."/>
            <person name="Wang G."/>
            <person name="Tsuk S."/>
            <person name="Dodo C."/>
            <person name="Kang Y."/>
            <person name="Tang L."/>
            <person name="Wheeler M.B."/>
            <person name="Cattral M.S."/>
            <person name="Lakey J.R."/>
            <person name="Salapatek A.M."/>
            <person name="Lotan I."/>
            <person name="Gaisano H.Y."/>
        </authorList>
    </citation>
    <scope>TISSUE SPECIFICITY</scope>
</reference>
<reference key="9">
    <citation type="journal article" date="2002" name="Proc. Natl. Acad. Sci. U.S.A.">
        <title>Obligatory heterotetramerization of three previously uncharacterized Kv channel alpha-subunits identified in the human genome.</title>
        <authorList>
            <person name="Ottschytsch N."/>
            <person name="Raes A."/>
            <person name="Van Hoorick D."/>
            <person name="Snyders D.J."/>
        </authorList>
    </citation>
    <scope>FUNCTION</scope>
    <scope>SUBUNIT</scope>
    <scope>INTERACTION WITH KCNG3; KCNH1 AND KCNH2</scope>
    <scope>SELF-ASSOCIATION</scope>
    <scope>DOMAIN</scope>
    <scope>SUBCELLULAR LOCATION</scope>
</reference>
<reference key="10">
    <citation type="journal article" date="2003" name="Chem. Res. Toxicol.">
        <title>Structural basis of binding and inhibition of novel tarantula toxins in mammalian voltage-dependent potassium channels.</title>
        <authorList>
            <person name="Shiau Y.S."/>
            <person name="Huang P.T."/>
            <person name="Liou H.H."/>
            <person name="Liaw Y.C."/>
            <person name="Shiau Y.Y."/>
            <person name="Lou K.L."/>
        </authorList>
    </citation>
    <scope>ACTIVITY REGULATION</scope>
</reference>
<reference key="11">
    <citation type="journal article" date="2003" name="J. Biol. Chem.">
        <title>The Roles of N- and C-terminal determinants in the activation of the Kv2.1 potassium channel.</title>
        <authorList>
            <person name="Ju M."/>
            <person name="Stevens L."/>
            <person name="Leadbitter E."/>
            <person name="Wray D."/>
        </authorList>
    </citation>
    <scope>FUNCTION</scope>
    <scope>SELF-ASSOCIATION</scope>
    <scope>DOMAIN</scope>
    <scope>SUBCELLULAR LOCATION</scope>
    <scope>MUTAGENESIS OF GLU-71 AND ASP-79</scope>
</reference>
<reference key="12">
    <citation type="journal article" date="2004" name="Diabetes">
        <title>Expression of voltage-gated potassium channels in human and rhesus pancreatic islets.</title>
        <authorList>
            <person name="Yan L."/>
            <person name="Figueroa D.J."/>
            <person name="Austin C.P."/>
            <person name="Liu Y."/>
            <person name="Bugianesi R.M."/>
            <person name="Slaughter R.S."/>
            <person name="Kaczorowski G.J."/>
            <person name="Kohler M.G."/>
        </authorList>
    </citation>
    <scope>TISSUE SPECIFICITY</scope>
</reference>
<reference key="13">
    <citation type="journal article" date="2005" name="Cell Biochem. Biophys.">
        <title>Molecular determinants of voltage-gated potassium currents in vascular smooth muscle.</title>
        <authorList>
            <person name="Cox R.H."/>
        </authorList>
    </citation>
    <scope>REVIEW</scope>
</reference>
<reference key="14">
    <citation type="journal article" date="2009" name="Am. J. Physiol.">
        <title>Kv2.1 and silent Kv subunits underlie the delayed rectifier K+ current in cultured small mouse DRG neurons.</title>
        <authorList>
            <person name="Bocksteins E."/>
            <person name="Raes A.L."/>
            <person name="Van de Vijver G."/>
            <person name="Bruyns T."/>
            <person name="Van Bogaert P.P."/>
            <person name="Snyders D.J."/>
        </authorList>
    </citation>
    <scope>SUBUNIT</scope>
</reference>
<reference key="15">
    <citation type="journal article" date="2009" name="J. Biol. Chem.">
        <title>Mutation of histidine 105 in the T1 domain of the potassium channel Kv2.1 disrupts heteromerization with Kv6.3 and Kv6.4.</title>
        <authorList>
            <person name="Mederos y Schnitzler M."/>
            <person name="Rinne S."/>
            <person name="Skrobek L."/>
            <person name="Renigunta V."/>
            <person name="Schlichthorl G."/>
            <person name="Derst C."/>
            <person name="Gudermann T."/>
            <person name="Daut J."/>
            <person name="Preisig-Muller R."/>
        </authorList>
    </citation>
    <scope>FUNCTION</scope>
    <scope>SUBUNIT</scope>
    <scope>INTERACTION WITH KCNG4</scope>
    <scope>SELF-ASSOCIATION</scope>
    <scope>DOMAIN</scope>
    <scope>SUBCELLULAR LOCATION</scope>
    <scope>MUTAGENESIS OF HIS-105</scope>
    <scope>TISSUE SPECIFICITY</scope>
</reference>
<reference key="16">
    <citation type="journal article" date="2009" name="J. Biol. Chem.">
        <title>Conserved negative charges in the N-terminal tetramerization domain mediate efficient assembly of Kv2.1 and Kv2.1/Kv6.4 channels.</title>
        <authorList>
            <person name="Bocksteins E."/>
            <person name="Labro A.J."/>
            <person name="Mayeur E."/>
            <person name="Bruyns T."/>
            <person name="Timmermans J.P."/>
            <person name="Adriaensen D."/>
            <person name="Snyders D.J."/>
        </authorList>
    </citation>
    <scope>FUNCTION</scope>
    <scope>SUBUNIT</scope>
    <scope>SUBCELLULAR LOCATION</scope>
    <scope>MUTAGENESIS OF ASP-74 AND ASP-75</scope>
</reference>
<reference key="17">
    <citation type="journal article" date="2009" name="J. Cell Sci.">
        <title>SUMOylation regulates Kv2.1 and modulates pancreatic beta-cell excitability.</title>
        <authorList>
            <person name="Dai X.Q."/>
            <person name="Kolic J."/>
            <person name="Marchi P."/>
            <person name="Sipione S."/>
            <person name="Macdonald P.E."/>
        </authorList>
    </citation>
    <scope>FUNCTION</scope>
    <scope>TRANSPORTER ACTIVITY</scope>
    <scope>SUMOYLATION</scope>
    <scope>DESUMOYLATION</scope>
    <scope>INTERACTION WITH SUMO1</scope>
    <scope>SUBCELLULAR LOCATION</scope>
</reference>
<reference key="18">
    <citation type="journal article" date="2013" name="J. Pharmacol. Exp. Ther.">
        <title>The role of voltage-gated potassium channels Kv2.1 and Kv2.2 in the regulation of insulin and somatostatin release from pancreatic islets.</title>
        <authorList>
            <person name="Li X.N."/>
            <person name="Herrington J."/>
            <person name="Petrov A."/>
            <person name="Ge L."/>
            <person name="Eiermann G."/>
            <person name="Xiong Y."/>
            <person name="Jensen M.V."/>
            <person name="Hohmeier H.E."/>
            <person name="Newgard C.B."/>
            <person name="Garcia M.L."/>
            <person name="Wagner M."/>
            <person name="Zhang B.B."/>
            <person name="Thornberry N.A."/>
            <person name="Howard A.D."/>
            <person name="Kaczorowski G.J."/>
            <person name="Zhou Y.P."/>
        </authorList>
    </citation>
    <scope>FUNCTION</scope>
</reference>
<reference key="19">
    <citation type="journal article" date="2014" name="J. Comp. Neurol.">
        <title>A unique ion channel clustering domain on the axon initial segment of mammalian neurons.</title>
        <authorList>
            <person name="King A.N."/>
            <person name="Manning C.F."/>
            <person name="Trimmer J.S."/>
        </authorList>
    </citation>
    <scope>SUBCELLULAR LOCATION</scope>
    <scope>TISSUE SPECIFICITY</scope>
</reference>
<reference key="20">
    <citation type="journal article" date="2014" name="PLoS ONE">
        <title>The subfamily-specific interaction between Kv2.1 and Kv6.4 subunits is determined by interactions between the N- and C-termini.</title>
        <authorList>
            <person name="Bocksteins E."/>
            <person name="Mayeur E."/>
            <person name="Van Tilborg A."/>
            <person name="Regnier G."/>
            <person name="Timmermans J.P."/>
            <person name="Snyders D.J."/>
        </authorList>
    </citation>
    <scope>FUNCTION</scope>
    <scope>SUBUNIT</scope>
    <scope>INTERACTION WITH KCNG4</scope>
    <scope>SELF-ASSOCIATION</scope>
    <scope>DOMAIN</scope>
    <scope>SUBCELLULAR LOCATION</scope>
    <scope>MUTAGENESIS OF ASP-74 AND ASP-75</scope>
</reference>
<reference key="21">
    <citation type="journal article" date="2021" name="Mol. Genet. Genomic Med.">
        <title>Compound heterozygous KCNV2 variants contribute to cone dystrophy with supernormal rod responses in a Chinese family.</title>
        <authorList>
            <person name="Liu M."/>
            <person name="Zhu Y."/>
            <person name="Huang L."/>
            <person name="Jiang W."/>
            <person name="Wu N."/>
            <person name="Song Y."/>
            <person name="Lu Y."/>
            <person name="Ma Y."/>
        </authorList>
    </citation>
    <scope>INTERACTION WITH KCNV2</scope>
</reference>
<reference key="22">
    <citation type="journal article" date="2020" name="EMBO J.">
        <title>FFAT motif phosphorylation controls formation and lipid transfer function of inter-organelle contacts.</title>
        <authorList>
            <person name="Di Mattia T."/>
            <person name="Martinet A."/>
            <person name="Ikhlef S."/>
            <person name="McEwen A.G."/>
            <person name="Nomine Y."/>
            <person name="Wendling C."/>
            <person name="Poussin-Courmontagne P."/>
            <person name="Voilquin L."/>
            <person name="Eberling P."/>
            <person name="Ruffenach F."/>
            <person name="Cavarelli J."/>
            <person name="Slee J."/>
            <person name="Levine T.P."/>
            <person name="Drin G."/>
            <person name="Tomasetto C."/>
            <person name="Alpy F."/>
        </authorList>
    </citation>
    <scope>INTERACTION WITH VAPA AND VAPB</scope>
    <scope>FFAT MOTIF</scope>
    <scope>PHOSPHORYLATION AT SER-593</scope>
    <scope>DOMAIN</scope>
</reference>
<reference key="23">
    <citation type="journal article" date="2014" name="Ann. Neurol.">
        <title>De novo KCNB1 mutations in epileptic encephalopathy.</title>
        <authorList>
            <person name="Torkamani A."/>
            <person name="Bersell K."/>
            <person name="Jorge B.S."/>
            <person name="Bjork R.L. Jr."/>
            <person name="Friedman J.R."/>
            <person name="Bloss C.S."/>
            <person name="Cohen J."/>
            <person name="Gupta S."/>
            <person name="Naidu S."/>
            <person name="Vanoye C.G."/>
            <person name="George A.L. Jr."/>
            <person name="Kearney J.A."/>
        </authorList>
    </citation>
    <scope>VARIANTS DEE26 ARG-347; ILE-374 AND ARG-379</scope>
    <scope>CHARACTERIZATION OF VARIANTS DEE26 ARG-347; ILE-374 AND ARG-379</scope>
    <scope>INVOLVEMENT IN DEE26</scope>
</reference>
<reference key="24">
    <citation type="journal article" date="2015" name="J. Gen. Physiol.">
        <title>A novel epileptic encephalopathy mutation in KCNB1 disrupts Kv2.1 ion selectivity, expression, and localization.</title>
        <authorList>
            <person name="Thiffault I."/>
            <person name="Speca D.J."/>
            <person name="Austin D.C."/>
            <person name="Cobb M.M."/>
            <person name="Eum K.S."/>
            <person name="Safina N.P."/>
            <person name="Grote L."/>
            <person name="Farrow E.G."/>
            <person name="Miller N."/>
            <person name="Soden S."/>
            <person name="Kingsmore S.F."/>
            <person name="Trimmer J.S."/>
            <person name="Saunders C.J."/>
            <person name="Sack J.T."/>
        </authorList>
    </citation>
    <scope>VARIANT DEE26 ALA-378</scope>
    <scope>CHARACTERIZATION OF VARIANT DEE26 ALA-378</scope>
    <scope>SUBCELLULAR LOCATION</scope>
</reference>
<reference key="25">
    <citation type="journal article" date="2015" name="Sci. Rep.">
        <title>De novo KCNB1 mutations in infantile epilepsy inhibit repetitive neuronal firing.</title>
        <authorList>
            <person name="Saitsu H."/>
            <person name="Akita T."/>
            <person name="Tohyama J."/>
            <person name="Goldberg-Stern H."/>
            <person name="Kobayashi Y."/>
            <person name="Cohen R."/>
            <person name="Kato M."/>
            <person name="Ohba C."/>
            <person name="Miyatake S."/>
            <person name="Tsurusaki Y."/>
            <person name="Nakashima M."/>
            <person name="Miyake N."/>
            <person name="Fukuda A."/>
            <person name="Matsumoto N."/>
        </authorList>
    </citation>
    <scope>VARIANTS DEE26 CYS-306 AND ARG-401</scope>
    <scope>CHARACTERIZATION OF VARIANTS DEE26 CYS-306 AND ARG-401</scope>
</reference>
<evidence type="ECO:0000250" key="1">
    <source>
        <dbReference type="UniProtKB" id="P15387"/>
    </source>
</evidence>
<evidence type="ECO:0000250" key="2">
    <source>
        <dbReference type="UniProtKB" id="P63142"/>
    </source>
</evidence>
<evidence type="ECO:0000250" key="3">
    <source>
        <dbReference type="UniProtKB" id="Q03717"/>
    </source>
</evidence>
<evidence type="ECO:0000256" key="4">
    <source>
        <dbReference type="SAM" id="MobiDB-lite"/>
    </source>
</evidence>
<evidence type="ECO:0000269" key="5">
    <source>
    </source>
</evidence>
<evidence type="ECO:0000269" key="6">
    <source>
    </source>
</evidence>
<evidence type="ECO:0000269" key="7">
    <source>
    </source>
</evidence>
<evidence type="ECO:0000269" key="8">
    <source>
    </source>
</evidence>
<evidence type="ECO:0000269" key="9">
    <source>
    </source>
</evidence>
<evidence type="ECO:0000269" key="10">
    <source>
    </source>
</evidence>
<evidence type="ECO:0000269" key="11">
    <source>
    </source>
</evidence>
<evidence type="ECO:0000269" key="12">
    <source>
    </source>
</evidence>
<evidence type="ECO:0000269" key="13">
    <source>
    </source>
</evidence>
<evidence type="ECO:0000269" key="14">
    <source>
    </source>
</evidence>
<evidence type="ECO:0000269" key="15">
    <source>
    </source>
</evidence>
<evidence type="ECO:0000269" key="16">
    <source>
    </source>
</evidence>
<evidence type="ECO:0000269" key="17">
    <source>
    </source>
</evidence>
<evidence type="ECO:0000269" key="18">
    <source>
    </source>
</evidence>
<evidence type="ECO:0000269" key="19">
    <source>
    </source>
</evidence>
<evidence type="ECO:0000269" key="20">
    <source>
    </source>
</evidence>
<evidence type="ECO:0000269" key="21">
    <source>
    </source>
</evidence>
<evidence type="ECO:0000269" key="22">
    <source>
    </source>
</evidence>
<evidence type="ECO:0000269" key="23">
    <source>
    </source>
</evidence>
<evidence type="ECO:0000269" key="24">
    <source>
    </source>
</evidence>
<evidence type="ECO:0000269" key="25">
    <source>
    </source>
</evidence>
<evidence type="ECO:0000303" key="26">
    <source>
    </source>
</evidence>
<evidence type="ECO:0000305" key="27"/>
<evidence type="ECO:0000305" key="28">
    <source>
    </source>
</evidence>
<evidence type="ECO:0000305" key="29">
    <source>
    </source>
</evidence>
<evidence type="ECO:0000305" key="30">
    <source>
    </source>
</evidence>
<evidence type="ECO:0000312" key="31">
    <source>
        <dbReference type="HGNC" id="HGNC:6231"/>
    </source>
</evidence>
<evidence type="ECO:0007829" key="32">
    <source>
        <dbReference type="PDB" id="7RE5"/>
    </source>
</evidence>
<evidence type="ECO:0007829" key="33">
    <source>
        <dbReference type="PDB" id="7SPD"/>
    </source>
</evidence>
<organism>
    <name type="scientific">Homo sapiens</name>
    <name type="common">Human</name>
    <dbReference type="NCBI Taxonomy" id="9606"/>
    <lineage>
        <taxon>Eukaryota</taxon>
        <taxon>Metazoa</taxon>
        <taxon>Chordata</taxon>
        <taxon>Craniata</taxon>
        <taxon>Vertebrata</taxon>
        <taxon>Euteleostomi</taxon>
        <taxon>Mammalia</taxon>
        <taxon>Eutheria</taxon>
        <taxon>Euarchontoglires</taxon>
        <taxon>Primates</taxon>
        <taxon>Haplorrhini</taxon>
        <taxon>Catarrhini</taxon>
        <taxon>Hominidae</taxon>
        <taxon>Homo</taxon>
    </lineage>
</organism>
<proteinExistence type="evidence at protein level"/>
<comment type="function">
    <text evidence="1 3 5 6 7 9 10 13 16 17 19 25">Voltage-gated potassium channel that mediates transmembrane potassium transport in excitable membranes, primarily in the brain, but also in the pancreas and cardiovascular system. Contributes to the regulation of the action potential (AP) repolarization, duration and frequency of repetitive AP firing in neurons, muscle cells and endocrine cells and plays a role in homeostatic attenuation of electrical excitability throughout the brain (PubMed:23161216). Plays also a role in the regulation of exocytosis independently of its electrical function (By similarity). Forms tetrameric potassium-selective channels through which potassium ions pass in accordance with their electrochemical gradient. The channel alternates between opened and closed conformations in response to the voltage difference across the membrane. Homotetrameric channels mediate a delayed-rectifier voltage-dependent outward potassium current that display rapid activation and slow inactivation in response to membrane depolarization (PubMed:10484328, PubMed:12560340, PubMed:1283219, PubMed:19074135, PubMed:19717558, PubMed:24901643, PubMed:8081723). Can form functional homotetrameric and heterotetrameric channels that contain variable proportions of KCNB2; channel properties depend on the type of alpha subunits that are part of the channel (By similarity). Can also form functional heterotetrameric channels with other alpha subunits that are non-conducting when expressed alone, such as KCNF1, KCNG1, KCNG3, KCNG4, KCNH1, KCNH2, KCNS1, KCNS2, KCNS3 and KCNV1, creating a functionally diverse range of channel complexes (PubMed:10484328, PubMed:11852086, PubMed:12060745, PubMed:19074135, PubMed:19717558, PubMed:24901643). Heterotetrameric channel activity formed with KCNS3 show increased current amplitude with the threshold for action potential activation shifted towards more negative values in hypoxic-treated pulmonary artery smooth muscle cells (By similarity). Channel properties are also modulated by cytoplasmic ancillary beta subunits such as AMIGO1, KCNE1, KCNE2 and KCNE3, slowing activation and inactivation rate of the delayed rectifier potassium channels (By similarity). In vivo, membranes probably contain a mixture of heteromeric potassium channel complexes, making it difficult to assign currents observed in intact tissues to any particular potassium channel family member. Major contributor to the slowly inactivating delayed-rectifier voltage-gated potassium current in neurons of the central nervous system, sympathetic ganglion neurons, neuroendocrine cells, pancreatic beta cells, cardiomyocytes and smooth muscle cells. Mediates the major part of the somatodendritic delayed-rectifier potassium current in hippocampal and cortical pyramidal neurons and sympathetic superior cervical ganglion (CGC) neurons that acts to slow down periods of firing, especially during high frequency stimulation. Plays a role in the induction of long-term potentiation (LTP) of neuron excitability in the CA3 layer of the hippocampus (By similarity). Contributes to the regulation of glucose-induced action potential amplitude and duration in pancreatic beta cells, hence limiting calcium influx and insulin secretion (PubMed:23161216). Plays a role in the regulation of resting membrane potential and contraction in hypoxia-treated pulmonary artery smooth muscle cells. May contribute to the regulation of the duration of both the action potential of cardiomyocytes and the heart ventricular repolarization QT interval. Contributes to the pronounced pro-apoptotic potassium current surge during neuronal apoptotic cell death in response to oxidative injury. May confer neuroprotection in response to hypoxia/ischemic insults by suppressing pyramidal neurons hyperexcitability in hippocampal and cortical regions (By similarity). Promotes trafficking of KCNG3, KCNH1 and KCNH2 to the cell surface membrane, presumably by forming heterotetrameric channels with these subunits (PubMed:12060745). Plays a role in the calcium-dependent recruitment and release of fusion-competent vesicles from the soma of neurons, neuroendocrine and glucose-induced pancreatic beta cells by binding key components of the fusion machinery in a pore-independent manner (By similarity).</text>
</comment>
<comment type="catalytic activity">
    <reaction evidence="5 6 10 14 25">
        <text>K(+)(in) = K(+)(out)</text>
        <dbReference type="Rhea" id="RHEA:29463"/>
        <dbReference type="ChEBI" id="CHEBI:29103"/>
    </reaction>
</comment>
<comment type="activity regulation">
    <text evidence="1 10 11 25 28 29">Inhibited by 12.7 nM stromatoxin 1 (ScTx1), a spider venom toxin of the tarantula S.calceata (PubMed:14565763). Inhibited by 42 nM hanatoxin 1 (HaTx1), a spider venom toxin of the tarantula G.spatulata (PubMed:14565763). Modestly sensitive to millimolar levels of tetraethylammonium (TEA) (PubMed:1283219, PubMed:8081723). Modestly sensitive to millimolar levels of 4-aminopyridine (4-AP). Completely insensitive to toxins such as dendrotoxin (DTX) and charybdotoxin (CTX) (By similarity).</text>
</comment>
<comment type="biophysicochemical properties">
    <kinetics>
        <text evidence="5 6 10 25 28 29">Homotetrameric channels expressed in xenopus oocytes or in mammalian non-neuronal cells display delayed-rectifier voltage-dependent potassium currents which are activated during membrane depolarization, i.e within a risetime of about 20 msec (PubMed:1283219, PubMed:8081723). After that, inactivate very slowly, i.e within more than 5 sec (PubMed:1283219, PubMed:8081723). Their activation requires low threshold potentials of about -20 to -30 mV, with a midpoint activation at about 10 mV. For inactivation, the voltage at half-maximal amplitude is about -20 mV (PubMed:11852086). The time constant for recovery after inactivation is about 1.6 sec. Channels have an unitary conductance of about 8 pS (PubMed:10484328). The voltage-dependence of activation and inactivation and other channel characteristics vary depending on the experimental conditions, the expression system, the presence or absence of ancillary subunits and post-translational modifications.</text>
    </kinetics>
</comment>
<comment type="subunit">
    <text evidence="1 3 5 6 7 9 10 13 14 15 16 19 23 24 25">Homotetramer or heterotetramer with KCNB2 (PubMed:1283219, PubMed:8081723). Heterotetramer with non-conducting channel-forming alpha subunits such as KCNF1, KCNG1, KCNG3, KCNG4, KCNH1, KCNH2, KCNS1, KCNS2, KCNS3 and KCNV1 (PubMed:10484328, PubMed:11852086, PubMed:12060745, PubMed:19074135, PubMed:19357235, PubMed:19717558, PubMed:24901643). Channel activity is regulated by association with ancillary beta subunits such as AMIGO1, KCNE1, KCNE2 and KCNE3 (By similarity). Interacts with KCNV2 (PubMed:34535971). Self-associates (via N-terminus and C-terminus) (PubMed:12560340, PubMed:24901643); self-association is required to regulate trafficking, gating and C-terminal phosphorylation-dependent modulation of the channel (By similarity). Interacts (via C-terminus) with STX1A (via C-terminus); this decreases the rate of channel activation and increases the rate of channel inactivation in pancreatic beta cells, also induces neuronal apoptosis in response to oxidative injury as well as pore-independent enhancement of exocytosis in neuroendocrine cells, chromaffin cells, pancreatic beta cells and from the soma of dorsal root ganglia (DRG) neurons. Interacts (via N-terminus) with SNAP25; this decreases the rate of channel inactivation in pancreatic beta cells and also increases interaction during neuronal apoptosis in a N-methyl-D-aspartate receptor (NMDAR)-dependent manner. Interacts (via N-terminus and C-terminus) with VAMP2 (via N-terminus); stimulates channel inactivation rate. Interacts with CREB1; this promotes channel acetylation in response to stimulation of incretin hormones. Interacts (via N-terminus and C-terminus) with MYL12B. Interacts (via N-terminus) with PIAS3; this increases the number of functional channels at the cell surface (By similarity). Interacts with SUMO1 (PubMed:19223394). Interacts (via phosphorylated form) with PTPRE; this reduces phosphorylation and channel activity in heterologous cells (By similarity). Interacts (via phosphorylated FFAT motif) with VAPA and VAPB (PubMed:33124732).</text>
</comment>
<comment type="subcellular location">
    <subcellularLocation>
        <location evidence="5 6 7 9 10 13 14 16 18 19 22 25">Cell membrane</location>
    </subcellularLocation>
    <subcellularLocation>
        <location evidence="18">Perikaryon</location>
    </subcellularLocation>
    <subcellularLocation>
        <location evidence="18">Cell projection</location>
        <location evidence="18">Axon</location>
    </subcellularLocation>
    <subcellularLocation>
        <location evidence="18">Cell projection</location>
        <location evidence="18">Dendrite</location>
    </subcellularLocation>
    <subcellularLocation>
        <location>Membrane</location>
        <topology>Multi-pass membrane protein</topology>
    </subcellularLocation>
    <subcellularLocation>
        <location evidence="1">Postsynaptic cell membrane</location>
    </subcellularLocation>
    <subcellularLocation>
        <location evidence="1">Synapse</location>
    </subcellularLocation>
    <subcellularLocation>
        <location evidence="1">Synapse</location>
        <location evidence="1">Synaptosome</location>
    </subcellularLocation>
    <subcellularLocation>
        <location evidence="1">Lateral cell membrane</location>
    </subcellularLocation>
    <subcellularLocation>
        <location evidence="1">Cell membrane</location>
        <location evidence="1">Sarcolemma</location>
    </subcellularLocation>
    <text evidence="1 3 7 13 18 19">Localizes to high-density somatodendritic clusters and non-clustered sites on the surface of neocortical and hippocampal pyramidal neurons in a cortical actin cytoskeleton-dependent manner (PubMed:24477962). Also localizes to high-density clusters in the axon initial segment (AIS), at ankyrin-G-deficient sites, on the surface of neocortical and hippocampal pyramidal neurons (PubMed:24477962). KCNB1-containing AIS clusters localize either in close apposition to smooth endoplasmic reticulum cisternal organelles or with GABA-A receptor-containing synapses of hippocampal and cortical pyramidal neurons, respectively (PubMed:24477962). Localizes to high-density clusters on the cell surface of atrial and ventricular myocytes and at the lateral plasma membrane in epithelial cells. Localizes both to the axial and transverse tubules (T tubule) and sarcolemma in ventricular myocytes. Associated with lipid raft domains. In cortical neurons, apoptotic injuries induce de novo plasma membrane insertion in a SNARE-dependent manner causing an apoptotic potassium current surge.</text>
</comment>
<comment type="tissue specificity">
    <text evidence="8 12 13 18">Expressed in neocortical pyramidal cells (PubMed:24477962). Expressed in pancreatic beta cells (at protein level) (PubMed:12403834, PubMed:14988243). Expressed in brain, heart, lung, liver, colon, kidney and adrenal gland (PubMed:19074135). Expressed in the cortex, amygdala, cerebellum, pons, thalamus, hypothalamus, hippocampus and substantia nigra (PubMed:19074135).</text>
</comment>
<comment type="domain">
    <text evidence="2">The transmembrane segment S4 functions as a voltage-sensor and is characterized by a series of positively charged amino acids at every third position. Channel opening and closing is effected by a conformation change that affects the position and orientation of the voltage-sensor paddle formed by S3 and S4 within the membrane. A transmembrane electric field that is positive inside would push the positively charged S4 segment outwards, thereby opening the pore, while a field that is negative inside would pull the S4 segment inwards and close the pore. Changes in the position and orientation of S4 are then transmitted to the activation gate formed by the inner helix bundle via the S4-S5 linker region.</text>
</comment>
<comment type="domain">
    <text evidence="1 6 7 9 13 19">The N-terminal and C-terminal cytoplasmic regions mediate homooligomerization; self-association is required to regulate trafficking, gating and C-terminal phosphorylation-dependent modulation of the channel (PubMed:11852086, PubMed:12060745, PubMed:12560340, PubMed:19074135, PubMed:24901643). The N-terminal cytoplasmic region is important for interaction with other channel-forming alpha subunits and with ancillary beta subunits (PubMed:24901643). The C-terminus is necessary and sufficient for the restricted localization to, and clustering within, both in soma and proximal portions of dendrite of neurons and in lateral membrane of non-neuronal polarized cells. The C-terminus is both necessary and sufficient as a mediator of cholinergic and calcium-stimulated modulation of channel cell membrane clustering localization and activity in hippocampal neurons (By similarity).</text>
</comment>
<comment type="domain">
    <text evidence="23">The FFAT motif is involved in the interaction with VAPA and VAPB and its phosphorylation regulates these interactions.</text>
</comment>
<comment type="PTM">
    <text evidence="1 3 23">Phosphorylated. Differential C-terminal phosphorylation on a subset of serines allows graded activity-dependent regulation of channel gating in hippocampal neurons. Ser-607 and Tyr-128 are significant sites of voltage-gated regulation through phosphorylation/dephosphorylation activities. Tyr-128 can be phosphorylated by Src and dephosphorylated by cytoplasmic form of the phosphatase PTPRE. CDK5-induced Ser-607 phosphorylation increases in response to acute blockade of neuronal activity. Phosphorylated on Tyr-128 by Src and on Ser-805 by MAPK14/P38MAPK; phosphorylations are necessary and sufficient for an increase in plasma membrane insertion, apoptotic potassium current surge and completion of the neuronal cell death program. Phosphorylated on Ser-520, Ser-607, Ser-656 and Ser-805 by CDK5; phosphorylation is necessary for KCNB1 channel clustering formation. The Ser-607 phosphorylation state differs between KCNB1-containing clusters on the proximal and distal portions of the axon initial segment (AIS). Highly phosphorylated on serine residues in the C-terminal cytoplasmic tail in resting neurons. Phosphorylated in pancreatic beta cells in response to incretin hormones stimulation in a PKA- and RPS6KA5/MSK1-dependent signaling pathway, promoting beta cell survival. Phosphorylation on Ser-567 is reduced during postnatal development with low levels at P2 and P5; levels then increase to reach adult levels by P14. Phosphorylation on Ser-457, Ser-541, Ser-567, Ser-607, Ser-656 and Ser-720 as well as the N-terminal Ser-15 are sensitive to calcineurin-mediated dephosphorylation contributing to the modulation of the voltage-dependent gating properties. Dephosphorylation by phosphatase PTPRE confers neuroprotection by its inhibitory influence on the neuronal apoptotic potassium current surge in a Zn(2+)-dependent manner. Dephosphorylated at Ser-607 by protein phosphatase PPP1CA. Hypoxia-, seizure- or glutamate-induced neuronal activity promote calcium/calcineurin-dependent dephosphorylation resulting in a loss of KCNB1-containing clustering and enhanced channel activity. In response to brain ischemia, Ser-567 and Ser-607 are strongly dephosphorylated while Ser-457 and Ser-720 are less dephosphorylated. In response to brain seizures, phosphorylation levels on Ser-567 and Ser-607 are greatly reduced. Phosphorylated/dephosphorylated by Src or FYN tyrosine-protein kinases and tyrosine phosphatase PTPRE in primary Schwann cells and sciatic nerve tissue (By similarity). Phosphorylation at Ser-593 of the FFAT motif activates interaction with MOSPD2, VAPA and VAPB (PubMed:33124732).</text>
</comment>
<comment type="PTM">
    <text evidence="1">Acetylated. Acetylation occurs in pancreatic beta cells in response to stimulation by incretin hormones in a histone acetyltransferase (HAT)/histone deacetylase (HDAC)-dependent signaling pathway, promoting beta cell survival.</text>
</comment>
<comment type="PTM">
    <text evidence="14">Sumoylated on Lys-474, preferentially with SUMO1; sumoylation induces a positive shift in the voltage-dependence of activation and inhibits channel activity (PubMed:19223394). Sumoylation increases the frequency of repetitive action potential firing at the cell surface of hippocampal neurons and decreases its frequency in pancreatic beta cells (PubMed:19223394). Desumoylated by SENP1 (PubMed:19223394).</text>
</comment>
<comment type="disease" evidence="20 21 22">
    <disease id="DI-04249">
        <name>Developmental and epileptic encephalopathy 26</name>
        <acronym>DEE26</acronym>
        <description>A form of epileptic encephalopathy, a heterogeneous group of severe early-onset epilepsies characterized by refractory seizures, neurodevelopmental impairment, and poor prognosis. Development is normal prior to seizure onset, after which cognitive and motor delays become apparent. DEE26 patients manifest multiple types of seizures, delayed psychomotor development, poor or absent speech, hypotonia, hypsarrhythmia.</description>
        <dbReference type="MIM" id="616056"/>
    </disease>
    <text>The disease is caused by variants affecting the gene represented in this entry.</text>
</comment>
<comment type="similarity">
    <text evidence="27">Belongs to the potassium channel family. B (Shab) (TC 1.A.1.2) subfamily. Kv2.1/KCNB1 sub-subfamily.</text>
</comment>
<comment type="sequence caution" evidence="27">
    <conflict type="erroneous initiation">
        <sequence resource="EMBL-CDS" id="AAA36156"/>
    </conflict>
    <text>Truncated N-terminus.</text>
</comment>